<geneLocation type="mitochondrion"/>
<feature type="chain" id="PRO_0000061486" description="Cytochrome b">
    <location>
        <begin position="1"/>
        <end position="380"/>
    </location>
</feature>
<feature type="transmembrane region" description="Helical" evidence="2">
    <location>
        <begin position="34"/>
        <end position="54"/>
    </location>
</feature>
<feature type="transmembrane region" description="Helical" evidence="2">
    <location>
        <begin position="78"/>
        <end position="99"/>
    </location>
</feature>
<feature type="transmembrane region" description="Helical" evidence="2">
    <location>
        <begin position="114"/>
        <end position="134"/>
    </location>
</feature>
<feature type="transmembrane region" description="Helical" evidence="2">
    <location>
        <begin position="179"/>
        <end position="199"/>
    </location>
</feature>
<feature type="transmembrane region" description="Helical" evidence="2">
    <location>
        <begin position="227"/>
        <end position="247"/>
    </location>
</feature>
<feature type="transmembrane region" description="Helical" evidence="2">
    <location>
        <begin position="289"/>
        <end position="309"/>
    </location>
</feature>
<feature type="transmembrane region" description="Helical" evidence="2">
    <location>
        <begin position="321"/>
        <end position="341"/>
    </location>
</feature>
<feature type="transmembrane region" description="Helical" evidence="2">
    <location>
        <begin position="348"/>
        <end position="368"/>
    </location>
</feature>
<feature type="binding site" description="axial binding residue" evidence="2">
    <location>
        <position position="84"/>
    </location>
    <ligand>
        <name>heme b</name>
        <dbReference type="ChEBI" id="CHEBI:60344"/>
        <label>b562</label>
    </ligand>
    <ligandPart>
        <name>Fe</name>
        <dbReference type="ChEBI" id="CHEBI:18248"/>
    </ligandPart>
</feature>
<feature type="binding site" description="axial binding residue" evidence="2">
    <location>
        <position position="98"/>
    </location>
    <ligand>
        <name>heme b</name>
        <dbReference type="ChEBI" id="CHEBI:60344"/>
        <label>b566</label>
    </ligand>
    <ligandPart>
        <name>Fe</name>
        <dbReference type="ChEBI" id="CHEBI:18248"/>
    </ligandPart>
</feature>
<feature type="binding site" description="axial binding residue" evidence="2">
    <location>
        <position position="197"/>
    </location>
    <ligand>
        <name>heme b</name>
        <dbReference type="ChEBI" id="CHEBI:60344"/>
        <label>b566</label>
    </ligand>
    <ligandPart>
        <name>Fe</name>
        <dbReference type="ChEBI" id="CHEBI:18248"/>
    </ligandPart>
</feature>
<feature type="binding site" evidence="2">
    <location>
        <position position="202"/>
    </location>
    <ligand>
        <name>a ubiquinone</name>
        <dbReference type="ChEBI" id="CHEBI:16389"/>
    </ligand>
</feature>
<sequence>MAPTIRKSHPLLKIINVSFIDLPTPTNISSWWNFGSLLPVCLIAQIATGLFLAMHYTADTSLAFSSVAHICRDVNNGWLLRNLHANGASFFFICIYFHIGRGLYYGSYLYKETWNIGVILLLLVMATAFVGYVLPWGQMSFWGATVITNLLSAAPYIGSDLVQWIWGGFSVDNATLTRFFTFDFILLFIIAATSLIHLLFLHQTGSSNPTGLNSNLDKVSFHPYFSFKDLLGFIILLGALAILSTFAPNLLGDPDNFTPATPLSTPPHIKPEWYLLFAYAILRSILNKLGGVLALLLSIMVLFLMPITHTSKLRSLMFRPTAKAFFWALIANTIILTWIGGQPVEDPFISIGQIASGLYFLIFVLIIPTLGLLENKLLKI</sequence>
<protein>
    <recommendedName>
        <fullName>Cytochrome b</fullName>
    </recommendedName>
    <alternativeName>
        <fullName>Complex III subunit 3</fullName>
    </alternativeName>
    <alternativeName>
        <fullName>Complex III subunit III</fullName>
    </alternativeName>
    <alternativeName>
        <fullName>Cytochrome b-c1 complex subunit 3</fullName>
    </alternativeName>
    <alternativeName>
        <fullName>Ubiquinol-cytochrome-c reductase complex cytochrome b subunit</fullName>
    </alternativeName>
</protein>
<comment type="function">
    <text evidence="2">Component of the ubiquinol-cytochrome c reductase complex (complex III or cytochrome b-c1 complex) that is part of the mitochondrial respiratory chain. The b-c1 complex mediates electron transfer from ubiquinol to cytochrome c. Contributes to the generation of a proton gradient across the mitochondrial membrane that is then used for ATP synthesis.</text>
</comment>
<comment type="cofactor">
    <cofactor evidence="2">
        <name>heme b</name>
        <dbReference type="ChEBI" id="CHEBI:60344"/>
    </cofactor>
    <text evidence="2">Binds 2 heme b groups non-covalently.</text>
</comment>
<comment type="subunit">
    <text evidence="2">The cytochrome bc1 complex contains 3 respiratory subunits (MT-CYB, CYC1 and UQCRFS1), 2 core proteins (UQCRC1 and UQCRC2) and probably 6 low-molecular weight proteins.</text>
</comment>
<comment type="subcellular location">
    <subcellularLocation>
        <location evidence="2">Mitochondrion inner membrane</location>
        <topology evidence="2">Multi-pass membrane protein</topology>
    </subcellularLocation>
</comment>
<comment type="miscellaneous">
    <text evidence="1">Heme 1 (or BL or b562) is low-potential and absorbs at about 562 nm, and heme 2 (or BH or b566) is high-potential and absorbs at about 566 nm.</text>
</comment>
<comment type="similarity">
    <text evidence="3 4">Belongs to the cytochrome b family.</text>
</comment>
<comment type="caution">
    <text evidence="2">The full-length protein contains only eight transmembrane helices, not nine as predicted by bioinformatics tools.</text>
</comment>
<reference key="1">
    <citation type="journal article" date="1999" name="Korean J. Biol. Sci.">
        <title>Genetic variation of the mitochondrial cytochrome b sequence in Korean Rana rugosa (Amphibia; Ranidae).</title>
        <authorList>
            <person name="Lee H.-I."/>
            <person name="Yang D.-E."/>
            <person name="Kim Y.-R."/>
            <person name="Lee H."/>
            <person name="Lee J.-E."/>
            <person name="Yang S.-Y."/>
            <person name="Lee H.-Y."/>
        </authorList>
    </citation>
    <scope>NUCLEOTIDE SEQUENCE [GENOMIC DNA]</scope>
</reference>
<proteinExistence type="inferred from homology"/>
<evidence type="ECO:0000250" key="1"/>
<evidence type="ECO:0000250" key="2">
    <source>
        <dbReference type="UniProtKB" id="P00157"/>
    </source>
</evidence>
<evidence type="ECO:0000255" key="3">
    <source>
        <dbReference type="PROSITE-ProRule" id="PRU00967"/>
    </source>
</evidence>
<evidence type="ECO:0000255" key="4">
    <source>
        <dbReference type="PROSITE-ProRule" id="PRU00968"/>
    </source>
</evidence>
<keyword id="KW-0249">Electron transport</keyword>
<keyword id="KW-0349">Heme</keyword>
<keyword id="KW-0408">Iron</keyword>
<keyword id="KW-0472">Membrane</keyword>
<keyword id="KW-0479">Metal-binding</keyword>
<keyword id="KW-0496">Mitochondrion</keyword>
<keyword id="KW-0999">Mitochondrion inner membrane</keyword>
<keyword id="KW-0679">Respiratory chain</keyword>
<keyword id="KW-0812">Transmembrane</keyword>
<keyword id="KW-1133">Transmembrane helix</keyword>
<keyword id="KW-0813">Transport</keyword>
<keyword id="KW-0830">Ubiquinone</keyword>
<dbReference type="EMBL" id="AF205093">
    <property type="protein sequence ID" value="AAF17092.1"/>
    <property type="molecule type" value="Genomic_DNA"/>
</dbReference>
<dbReference type="SMR" id="Q9T6R3"/>
<dbReference type="GO" id="GO:0005743">
    <property type="term" value="C:mitochondrial inner membrane"/>
    <property type="evidence" value="ECO:0007669"/>
    <property type="project" value="UniProtKB-SubCell"/>
</dbReference>
<dbReference type="GO" id="GO:0045275">
    <property type="term" value="C:respiratory chain complex III"/>
    <property type="evidence" value="ECO:0007669"/>
    <property type="project" value="InterPro"/>
</dbReference>
<dbReference type="GO" id="GO:0046872">
    <property type="term" value="F:metal ion binding"/>
    <property type="evidence" value="ECO:0007669"/>
    <property type="project" value="UniProtKB-KW"/>
</dbReference>
<dbReference type="GO" id="GO:0008121">
    <property type="term" value="F:ubiquinol-cytochrome-c reductase activity"/>
    <property type="evidence" value="ECO:0007669"/>
    <property type="project" value="InterPro"/>
</dbReference>
<dbReference type="GO" id="GO:0006122">
    <property type="term" value="P:mitochondrial electron transport, ubiquinol to cytochrome c"/>
    <property type="evidence" value="ECO:0007669"/>
    <property type="project" value="TreeGrafter"/>
</dbReference>
<dbReference type="CDD" id="cd00290">
    <property type="entry name" value="cytochrome_b_C"/>
    <property type="match status" value="1"/>
</dbReference>
<dbReference type="CDD" id="cd00284">
    <property type="entry name" value="Cytochrome_b_N"/>
    <property type="match status" value="1"/>
</dbReference>
<dbReference type="FunFam" id="1.20.810.10:FF:000002">
    <property type="entry name" value="Cytochrome b"/>
    <property type="match status" value="1"/>
</dbReference>
<dbReference type="Gene3D" id="1.20.810.10">
    <property type="entry name" value="Cytochrome Bc1 Complex, Chain C"/>
    <property type="match status" value="1"/>
</dbReference>
<dbReference type="InterPro" id="IPR005798">
    <property type="entry name" value="Cyt_b/b6_C"/>
</dbReference>
<dbReference type="InterPro" id="IPR036150">
    <property type="entry name" value="Cyt_b/b6_C_sf"/>
</dbReference>
<dbReference type="InterPro" id="IPR005797">
    <property type="entry name" value="Cyt_b/b6_N"/>
</dbReference>
<dbReference type="InterPro" id="IPR027387">
    <property type="entry name" value="Cytb/b6-like_sf"/>
</dbReference>
<dbReference type="InterPro" id="IPR030689">
    <property type="entry name" value="Cytochrome_b"/>
</dbReference>
<dbReference type="InterPro" id="IPR048260">
    <property type="entry name" value="Cytochrome_b_C_euk/bac"/>
</dbReference>
<dbReference type="InterPro" id="IPR048259">
    <property type="entry name" value="Cytochrome_b_N_euk/bac"/>
</dbReference>
<dbReference type="InterPro" id="IPR016174">
    <property type="entry name" value="Di-haem_cyt_TM"/>
</dbReference>
<dbReference type="PANTHER" id="PTHR19271">
    <property type="entry name" value="CYTOCHROME B"/>
    <property type="match status" value="1"/>
</dbReference>
<dbReference type="PANTHER" id="PTHR19271:SF16">
    <property type="entry name" value="CYTOCHROME B"/>
    <property type="match status" value="1"/>
</dbReference>
<dbReference type="Pfam" id="PF00032">
    <property type="entry name" value="Cytochrom_B_C"/>
    <property type="match status" value="1"/>
</dbReference>
<dbReference type="Pfam" id="PF00033">
    <property type="entry name" value="Cytochrome_B"/>
    <property type="match status" value="1"/>
</dbReference>
<dbReference type="PIRSF" id="PIRSF038885">
    <property type="entry name" value="COB"/>
    <property type="match status" value="1"/>
</dbReference>
<dbReference type="SUPFAM" id="SSF81648">
    <property type="entry name" value="a domain/subunit of cytochrome bc1 complex (Ubiquinol-cytochrome c reductase)"/>
    <property type="match status" value="1"/>
</dbReference>
<dbReference type="SUPFAM" id="SSF81342">
    <property type="entry name" value="Transmembrane di-heme cytochromes"/>
    <property type="match status" value="1"/>
</dbReference>
<dbReference type="PROSITE" id="PS51003">
    <property type="entry name" value="CYTB_CTER"/>
    <property type="match status" value="1"/>
</dbReference>
<dbReference type="PROSITE" id="PS51002">
    <property type="entry name" value="CYTB_NTER"/>
    <property type="match status" value="1"/>
</dbReference>
<organism>
    <name type="scientific">Glandirana rugosa</name>
    <name type="common">Japanese wrinkled frog</name>
    <name type="synonym">Rana rugosa</name>
    <dbReference type="NCBI Taxonomy" id="8410"/>
    <lineage>
        <taxon>Eukaryota</taxon>
        <taxon>Metazoa</taxon>
        <taxon>Chordata</taxon>
        <taxon>Craniata</taxon>
        <taxon>Vertebrata</taxon>
        <taxon>Euteleostomi</taxon>
        <taxon>Amphibia</taxon>
        <taxon>Batrachia</taxon>
        <taxon>Anura</taxon>
        <taxon>Neobatrachia</taxon>
        <taxon>Ranoidea</taxon>
        <taxon>Ranidae</taxon>
        <taxon>Glandirana</taxon>
    </lineage>
</organism>
<name>CYB_GLARU</name>
<gene>
    <name type="primary">mt-cyb</name>
    <name type="synonym">cob</name>
    <name type="synonym">cytb</name>
    <name type="synonym">mtcyb</name>
</gene>
<accession>Q9T6R3</accession>